<feature type="chain" id="PRO_1000206037" description="4-hydroxy-tetrahydrodipicolinate synthase">
    <location>
        <begin position="1"/>
        <end position="291"/>
    </location>
</feature>
<feature type="active site" description="Proton donor/acceptor" evidence="1">
    <location>
        <position position="133"/>
    </location>
</feature>
<feature type="active site" description="Schiff-base intermediate with substrate" evidence="1">
    <location>
        <position position="161"/>
    </location>
</feature>
<feature type="binding site" evidence="1">
    <location>
        <position position="45"/>
    </location>
    <ligand>
        <name>pyruvate</name>
        <dbReference type="ChEBI" id="CHEBI:15361"/>
    </ligand>
</feature>
<feature type="binding site" evidence="1">
    <location>
        <position position="203"/>
    </location>
    <ligand>
        <name>pyruvate</name>
        <dbReference type="ChEBI" id="CHEBI:15361"/>
    </ligand>
</feature>
<feature type="site" description="Part of a proton relay during catalysis" evidence="1">
    <location>
        <position position="44"/>
    </location>
</feature>
<feature type="site" description="Part of a proton relay during catalysis" evidence="1">
    <location>
        <position position="107"/>
    </location>
</feature>
<sequence>MYRGSMVALVTPMKADGSLDWDALHKLIDWHLEQGTHAIVAVGTTGESATLNMAEHLEVISKVVDQVNGRVPVIAGTGANSTSEALELTQGAKQAKADACLLVTPYYNKPSQEGLYQHYCYLAREVAIPQFLYNVPGRTAVDMLPETVARLATVENIVGIKDATASMERLQQMQALTDDSFIFLSGDDATSVDFMALGGHGEISVTANVVPAQTAKICELALAGNVEQARELDRPLAPLHEALFLEANPVPVKWAMARMGFLDGALRLPLTPLNAVYHAQLEAAMLSAGAI</sequence>
<reference key="1">
    <citation type="journal article" date="2009" name="PLoS ONE">
        <title>The complete genome of Teredinibacter turnerae T7901: an intracellular endosymbiont of marine wood-boring bivalves (shipworms).</title>
        <authorList>
            <person name="Yang J.C."/>
            <person name="Madupu R."/>
            <person name="Durkin A.S."/>
            <person name="Ekborg N.A."/>
            <person name="Pedamallu C.S."/>
            <person name="Hostetler J.B."/>
            <person name="Radune D."/>
            <person name="Toms B.S."/>
            <person name="Henrissat B."/>
            <person name="Coutinho P.M."/>
            <person name="Schwarz S."/>
            <person name="Field L."/>
            <person name="Trindade-Silva A.E."/>
            <person name="Soares C.A.G."/>
            <person name="Elshahawi S."/>
            <person name="Hanora A."/>
            <person name="Schmidt E.W."/>
            <person name="Haygood M.G."/>
            <person name="Posfai J."/>
            <person name="Benner J."/>
            <person name="Madinger C."/>
            <person name="Nove J."/>
            <person name="Anton B."/>
            <person name="Chaudhary K."/>
            <person name="Foster J."/>
            <person name="Holman A."/>
            <person name="Kumar S."/>
            <person name="Lessard P.A."/>
            <person name="Luyten Y.A."/>
            <person name="Slatko B."/>
            <person name="Wood N."/>
            <person name="Wu B."/>
            <person name="Teplitski M."/>
            <person name="Mougous J.D."/>
            <person name="Ward N."/>
            <person name="Eisen J.A."/>
            <person name="Badger J.H."/>
            <person name="Distel D.L."/>
        </authorList>
    </citation>
    <scope>NUCLEOTIDE SEQUENCE [LARGE SCALE GENOMIC DNA]</scope>
    <source>
        <strain>ATCC 39867 / T7901</strain>
    </source>
</reference>
<accession>C5BQD1</accession>
<proteinExistence type="inferred from homology"/>
<name>DAPA_TERTT</name>
<keyword id="KW-0028">Amino-acid biosynthesis</keyword>
<keyword id="KW-0963">Cytoplasm</keyword>
<keyword id="KW-0220">Diaminopimelate biosynthesis</keyword>
<keyword id="KW-0456">Lyase</keyword>
<keyword id="KW-0457">Lysine biosynthesis</keyword>
<keyword id="KW-1185">Reference proteome</keyword>
<keyword id="KW-0704">Schiff base</keyword>
<evidence type="ECO:0000255" key="1">
    <source>
        <dbReference type="HAMAP-Rule" id="MF_00418"/>
    </source>
</evidence>
<evidence type="ECO:0000305" key="2"/>
<gene>
    <name evidence="1" type="primary">dapA</name>
    <name type="ordered locus">TERTU_0979</name>
</gene>
<organism>
    <name type="scientific">Teredinibacter turnerae (strain ATCC 39867 / T7901)</name>
    <dbReference type="NCBI Taxonomy" id="377629"/>
    <lineage>
        <taxon>Bacteria</taxon>
        <taxon>Pseudomonadati</taxon>
        <taxon>Pseudomonadota</taxon>
        <taxon>Gammaproteobacteria</taxon>
        <taxon>Cellvibrionales</taxon>
        <taxon>Cellvibrionaceae</taxon>
        <taxon>Teredinibacter</taxon>
    </lineage>
</organism>
<dbReference type="EC" id="4.3.3.7" evidence="1"/>
<dbReference type="EMBL" id="CP001614">
    <property type="protein sequence ID" value="ACR11286.1"/>
    <property type="molecule type" value="Genomic_DNA"/>
</dbReference>
<dbReference type="RefSeq" id="WP_015817398.1">
    <property type="nucleotide sequence ID" value="NC_012997.1"/>
</dbReference>
<dbReference type="SMR" id="C5BQD1"/>
<dbReference type="STRING" id="377629.TERTU_0979"/>
<dbReference type="KEGG" id="ttu:TERTU_0979"/>
<dbReference type="eggNOG" id="COG0329">
    <property type="taxonomic scope" value="Bacteria"/>
</dbReference>
<dbReference type="HOGENOM" id="CLU_049343_7_1_6"/>
<dbReference type="OrthoDB" id="9782828at2"/>
<dbReference type="UniPathway" id="UPA00034">
    <property type="reaction ID" value="UER00017"/>
</dbReference>
<dbReference type="Proteomes" id="UP000009080">
    <property type="component" value="Chromosome"/>
</dbReference>
<dbReference type="GO" id="GO:0005829">
    <property type="term" value="C:cytosol"/>
    <property type="evidence" value="ECO:0007669"/>
    <property type="project" value="TreeGrafter"/>
</dbReference>
<dbReference type="GO" id="GO:0008840">
    <property type="term" value="F:4-hydroxy-tetrahydrodipicolinate synthase activity"/>
    <property type="evidence" value="ECO:0007669"/>
    <property type="project" value="UniProtKB-UniRule"/>
</dbReference>
<dbReference type="GO" id="GO:0019877">
    <property type="term" value="P:diaminopimelate biosynthetic process"/>
    <property type="evidence" value="ECO:0007669"/>
    <property type="project" value="UniProtKB-UniRule"/>
</dbReference>
<dbReference type="GO" id="GO:0009089">
    <property type="term" value="P:lysine biosynthetic process via diaminopimelate"/>
    <property type="evidence" value="ECO:0007669"/>
    <property type="project" value="UniProtKB-UniRule"/>
</dbReference>
<dbReference type="CDD" id="cd00950">
    <property type="entry name" value="DHDPS"/>
    <property type="match status" value="1"/>
</dbReference>
<dbReference type="Gene3D" id="3.20.20.70">
    <property type="entry name" value="Aldolase class I"/>
    <property type="match status" value="1"/>
</dbReference>
<dbReference type="HAMAP" id="MF_00418">
    <property type="entry name" value="DapA"/>
    <property type="match status" value="1"/>
</dbReference>
<dbReference type="InterPro" id="IPR013785">
    <property type="entry name" value="Aldolase_TIM"/>
</dbReference>
<dbReference type="InterPro" id="IPR005263">
    <property type="entry name" value="DapA"/>
</dbReference>
<dbReference type="InterPro" id="IPR002220">
    <property type="entry name" value="DapA-like"/>
</dbReference>
<dbReference type="InterPro" id="IPR020625">
    <property type="entry name" value="Schiff_base-form_aldolases_AS"/>
</dbReference>
<dbReference type="InterPro" id="IPR020624">
    <property type="entry name" value="Schiff_base-form_aldolases_CS"/>
</dbReference>
<dbReference type="NCBIfam" id="TIGR00674">
    <property type="entry name" value="dapA"/>
    <property type="match status" value="1"/>
</dbReference>
<dbReference type="PANTHER" id="PTHR12128:SF66">
    <property type="entry name" value="4-HYDROXY-2-OXOGLUTARATE ALDOLASE, MITOCHONDRIAL"/>
    <property type="match status" value="1"/>
</dbReference>
<dbReference type="PANTHER" id="PTHR12128">
    <property type="entry name" value="DIHYDRODIPICOLINATE SYNTHASE"/>
    <property type="match status" value="1"/>
</dbReference>
<dbReference type="Pfam" id="PF00701">
    <property type="entry name" value="DHDPS"/>
    <property type="match status" value="1"/>
</dbReference>
<dbReference type="PIRSF" id="PIRSF001365">
    <property type="entry name" value="DHDPS"/>
    <property type="match status" value="1"/>
</dbReference>
<dbReference type="PRINTS" id="PR00146">
    <property type="entry name" value="DHPICSNTHASE"/>
</dbReference>
<dbReference type="SMART" id="SM01130">
    <property type="entry name" value="DHDPS"/>
    <property type="match status" value="1"/>
</dbReference>
<dbReference type="SUPFAM" id="SSF51569">
    <property type="entry name" value="Aldolase"/>
    <property type="match status" value="1"/>
</dbReference>
<dbReference type="PROSITE" id="PS00665">
    <property type="entry name" value="DHDPS_1"/>
    <property type="match status" value="1"/>
</dbReference>
<dbReference type="PROSITE" id="PS00666">
    <property type="entry name" value="DHDPS_2"/>
    <property type="match status" value="1"/>
</dbReference>
<comment type="function">
    <text evidence="1">Catalyzes the condensation of (S)-aspartate-beta-semialdehyde [(S)-ASA] and pyruvate to 4-hydroxy-tetrahydrodipicolinate (HTPA).</text>
</comment>
<comment type="catalytic activity">
    <reaction evidence="1">
        <text>L-aspartate 4-semialdehyde + pyruvate = (2S,4S)-4-hydroxy-2,3,4,5-tetrahydrodipicolinate + H2O + H(+)</text>
        <dbReference type="Rhea" id="RHEA:34171"/>
        <dbReference type="ChEBI" id="CHEBI:15361"/>
        <dbReference type="ChEBI" id="CHEBI:15377"/>
        <dbReference type="ChEBI" id="CHEBI:15378"/>
        <dbReference type="ChEBI" id="CHEBI:67139"/>
        <dbReference type="ChEBI" id="CHEBI:537519"/>
        <dbReference type="EC" id="4.3.3.7"/>
    </reaction>
</comment>
<comment type="pathway">
    <text evidence="1">Amino-acid biosynthesis; L-lysine biosynthesis via DAP pathway; (S)-tetrahydrodipicolinate from L-aspartate: step 3/4.</text>
</comment>
<comment type="subunit">
    <text evidence="1">Homotetramer; dimer of dimers.</text>
</comment>
<comment type="subcellular location">
    <subcellularLocation>
        <location evidence="1">Cytoplasm</location>
    </subcellularLocation>
</comment>
<comment type="similarity">
    <text evidence="1">Belongs to the DapA family.</text>
</comment>
<comment type="caution">
    <text evidence="2">Was originally thought to be a dihydrodipicolinate synthase (DHDPS), catalyzing the condensation of (S)-aspartate-beta-semialdehyde [(S)-ASA] and pyruvate to dihydrodipicolinate (DHDP). However, it was shown in E.coli that the product of the enzymatic reaction is not dihydrodipicolinate but in fact (4S)-4-hydroxy-2,3,4,5-tetrahydro-(2S)-dipicolinic acid (HTPA), and that the consecutive dehydration reaction leading to DHDP is not spontaneous but catalyzed by DapB.</text>
</comment>
<protein>
    <recommendedName>
        <fullName evidence="1">4-hydroxy-tetrahydrodipicolinate synthase</fullName>
        <shortName evidence="1">HTPA synthase</shortName>
        <ecNumber evidence="1">4.3.3.7</ecNumber>
    </recommendedName>
</protein>